<dbReference type="EC" id="2.7.7.6" evidence="16 17 18"/>
<dbReference type="EMBL" id="U33460">
    <property type="protein sequence ID" value="AAC99959.1"/>
    <property type="status" value="ALT_FRAME"/>
    <property type="molecule type" value="mRNA"/>
</dbReference>
<dbReference type="EMBL" id="AH007280">
    <property type="protein sequence ID" value="AAD09356.1"/>
    <property type="status" value="ALT_FRAME"/>
    <property type="molecule type" value="Transcribed_RNA"/>
</dbReference>
<dbReference type="EMBL" id="AK302458">
    <property type="protein sequence ID" value="BAH13716.1"/>
    <property type="molecule type" value="mRNA"/>
</dbReference>
<dbReference type="EMBL" id="CH471053">
    <property type="protein sequence ID" value="EAW99467.1"/>
    <property type="molecule type" value="Genomic_DNA"/>
</dbReference>
<dbReference type="EMBL" id="CH471053">
    <property type="protein sequence ID" value="EAW99469.1"/>
    <property type="molecule type" value="Genomic_DNA"/>
</dbReference>
<dbReference type="EMBL" id="BC117173">
    <property type="protein sequence ID" value="AAI17174.1"/>
    <property type="molecule type" value="mRNA"/>
</dbReference>
<dbReference type="EMBL" id="BC126303">
    <property type="protein sequence ID" value="AAI26304.1"/>
    <property type="molecule type" value="mRNA"/>
</dbReference>
<dbReference type="EMBL" id="AL117467">
    <property type="protein sequence ID" value="CAB55942.1"/>
    <property type="molecule type" value="mRNA"/>
</dbReference>
<dbReference type="CCDS" id="CCDS42706.1"/>
<dbReference type="PIR" id="T17252">
    <property type="entry name" value="T17252"/>
</dbReference>
<dbReference type="RefSeq" id="NP_056240.2">
    <property type="nucleotide sequence ID" value="NM_015425.6"/>
</dbReference>
<dbReference type="PDB" id="7OB9">
    <property type="method" value="EM"/>
    <property type="resolution" value="2.70 A"/>
    <property type="chains" value="A=1-1720"/>
</dbReference>
<dbReference type="PDB" id="7OBA">
    <property type="method" value="EM"/>
    <property type="resolution" value="3.10 A"/>
    <property type="chains" value="A=1-1720"/>
</dbReference>
<dbReference type="PDB" id="7OBB">
    <property type="method" value="EM"/>
    <property type="resolution" value="3.30 A"/>
    <property type="chains" value="A=1-1720"/>
</dbReference>
<dbReference type="PDB" id="7VBA">
    <property type="method" value="EM"/>
    <property type="resolution" value="2.89 A"/>
    <property type="chains" value="A=1-1719"/>
</dbReference>
<dbReference type="PDB" id="7VBB">
    <property type="method" value="EM"/>
    <property type="resolution" value="2.81 A"/>
    <property type="chains" value="A=1-1719"/>
</dbReference>
<dbReference type="PDB" id="7VBC">
    <property type="method" value="EM"/>
    <property type="resolution" value="3.01 A"/>
    <property type="chains" value="A=1-1719"/>
</dbReference>
<dbReference type="PDB" id="8A43">
    <property type="method" value="EM"/>
    <property type="resolution" value="4.09 A"/>
    <property type="chains" value="A=1-1720"/>
</dbReference>
<dbReference type="PDBsum" id="7OB9"/>
<dbReference type="PDBsum" id="7OBA"/>
<dbReference type="PDBsum" id="7OBB"/>
<dbReference type="PDBsum" id="7VBA"/>
<dbReference type="PDBsum" id="7VBB"/>
<dbReference type="PDBsum" id="7VBC"/>
<dbReference type="PDBsum" id="8A43"/>
<dbReference type="EMDB" id="EMD-12795"/>
<dbReference type="EMDB" id="EMD-12796"/>
<dbReference type="EMDB" id="EMD-12797"/>
<dbReference type="EMDB" id="EMD-15135"/>
<dbReference type="EMDB" id="EMD-31876"/>
<dbReference type="EMDB" id="EMD-31877"/>
<dbReference type="EMDB" id="EMD-31878"/>
<dbReference type="SMR" id="O95602"/>
<dbReference type="BioGRID" id="117396">
    <property type="interactions" value="208"/>
</dbReference>
<dbReference type="ComplexPortal" id="CPX-2386">
    <property type="entry name" value="DNA-directed RNA polymerase I complex"/>
</dbReference>
<dbReference type="CORUM" id="O95602"/>
<dbReference type="DIP" id="DIP-27537N"/>
<dbReference type="FunCoup" id="O95602">
    <property type="interactions" value="2232"/>
</dbReference>
<dbReference type="IntAct" id="O95602">
    <property type="interactions" value="81"/>
</dbReference>
<dbReference type="MINT" id="O95602"/>
<dbReference type="STRING" id="9606.ENSP00000263857"/>
<dbReference type="BindingDB" id="O95602"/>
<dbReference type="ChEMBL" id="CHEMBL3286067"/>
<dbReference type="GlyGen" id="O95602">
    <property type="glycosylation" value="1 site"/>
</dbReference>
<dbReference type="iPTMnet" id="O95602"/>
<dbReference type="MetOSite" id="O95602"/>
<dbReference type="PhosphoSitePlus" id="O95602"/>
<dbReference type="SwissPalm" id="O95602"/>
<dbReference type="BioMuta" id="POLR1A"/>
<dbReference type="jPOST" id="O95602"/>
<dbReference type="MassIVE" id="O95602"/>
<dbReference type="PaxDb" id="9606-ENSP00000263857"/>
<dbReference type="PeptideAtlas" id="O95602"/>
<dbReference type="ProteomicsDB" id="50948"/>
<dbReference type="Pumba" id="O95602"/>
<dbReference type="Antibodypedia" id="4117">
    <property type="antibodies" value="121 antibodies from 27 providers"/>
</dbReference>
<dbReference type="DNASU" id="25885"/>
<dbReference type="Ensembl" id="ENST00000263857.11">
    <property type="protein sequence ID" value="ENSP00000263857.6"/>
    <property type="gene ID" value="ENSG00000068654.17"/>
</dbReference>
<dbReference type="GeneID" id="25885"/>
<dbReference type="KEGG" id="hsa:25885"/>
<dbReference type="MANE-Select" id="ENST00000263857.11">
    <property type="protein sequence ID" value="ENSP00000263857.6"/>
    <property type="RefSeq nucleotide sequence ID" value="NM_015425.6"/>
    <property type="RefSeq protein sequence ID" value="NP_056240.2"/>
</dbReference>
<dbReference type="UCSC" id="uc002sqs.4">
    <property type="organism name" value="human"/>
</dbReference>
<dbReference type="AGR" id="HGNC:17264"/>
<dbReference type="CTD" id="25885"/>
<dbReference type="DisGeNET" id="25885"/>
<dbReference type="GeneCards" id="POLR1A"/>
<dbReference type="HGNC" id="HGNC:17264">
    <property type="gene designation" value="POLR1A"/>
</dbReference>
<dbReference type="HPA" id="ENSG00000068654">
    <property type="expression patterns" value="Low tissue specificity"/>
</dbReference>
<dbReference type="MalaCards" id="POLR1A"/>
<dbReference type="MIM" id="616404">
    <property type="type" value="gene"/>
</dbReference>
<dbReference type="MIM" id="616462">
    <property type="type" value="phenotype"/>
</dbReference>
<dbReference type="MIM" id="620675">
    <property type="type" value="phenotype"/>
</dbReference>
<dbReference type="neXtProt" id="NX_O95602"/>
<dbReference type="OpenTargets" id="ENSG00000068654"/>
<dbReference type="Orphanet" id="1200">
    <property type="disease" value="Burn-McKeown syndrome"/>
</dbReference>
<dbReference type="PharmGKB" id="PA134891380"/>
<dbReference type="VEuPathDB" id="HostDB:ENSG00000068654"/>
<dbReference type="eggNOG" id="KOG0262">
    <property type="taxonomic scope" value="Eukaryota"/>
</dbReference>
<dbReference type="GeneTree" id="ENSGT00920000149138"/>
<dbReference type="InParanoid" id="O95602"/>
<dbReference type="OMA" id="NREDYQQ"/>
<dbReference type="OrthoDB" id="270392at2759"/>
<dbReference type="PAN-GO" id="O95602">
    <property type="GO annotations" value="2 GO annotations based on evolutionary models"/>
</dbReference>
<dbReference type="PhylomeDB" id="O95602"/>
<dbReference type="TreeFam" id="TF103033"/>
<dbReference type="PathwayCommons" id="O95602"/>
<dbReference type="Reactome" id="R-HSA-427413">
    <property type="pathway name" value="NoRC negatively regulates rRNA expression"/>
</dbReference>
<dbReference type="Reactome" id="R-HSA-5250924">
    <property type="pathway name" value="B-WICH complex positively regulates rRNA expression"/>
</dbReference>
<dbReference type="Reactome" id="R-HSA-73762">
    <property type="pathway name" value="RNA Polymerase I Transcription Initiation"/>
</dbReference>
<dbReference type="Reactome" id="R-HSA-73772">
    <property type="pathway name" value="RNA Polymerase I Promoter Escape"/>
</dbReference>
<dbReference type="Reactome" id="R-HSA-73863">
    <property type="pathway name" value="RNA Polymerase I Transcription Termination"/>
</dbReference>
<dbReference type="SignaLink" id="O95602"/>
<dbReference type="SIGNOR" id="O95602"/>
<dbReference type="BioGRID-ORCS" id="25885">
    <property type="hits" value="718 hits in 1129 CRISPR screens"/>
</dbReference>
<dbReference type="CD-CODE" id="6F24707C">
    <property type="entry name" value="Cajal body"/>
</dbReference>
<dbReference type="CD-CODE" id="91857CE7">
    <property type="entry name" value="Nucleolus"/>
</dbReference>
<dbReference type="ChiTaRS" id="POLR1A">
    <property type="organism name" value="human"/>
</dbReference>
<dbReference type="GeneWiki" id="POLR1A"/>
<dbReference type="GenomeRNAi" id="25885"/>
<dbReference type="Pharos" id="O95602">
    <property type="development level" value="Tchem"/>
</dbReference>
<dbReference type="PRO" id="PR:O95602"/>
<dbReference type="Proteomes" id="UP000005640">
    <property type="component" value="Chromosome 2"/>
</dbReference>
<dbReference type="RNAct" id="O95602">
    <property type="molecule type" value="protein"/>
</dbReference>
<dbReference type="Bgee" id="ENSG00000068654">
    <property type="expression patterns" value="Expressed in sural nerve and 130 other cell types or tissues"/>
</dbReference>
<dbReference type="ExpressionAtlas" id="O95602">
    <property type="expression patterns" value="baseline and differential"/>
</dbReference>
<dbReference type="GO" id="GO:0000785">
    <property type="term" value="C:chromatin"/>
    <property type="evidence" value="ECO:0000315"/>
    <property type="project" value="ParkinsonsUK-UCL"/>
</dbReference>
<dbReference type="GO" id="GO:0005694">
    <property type="term" value="C:chromosome"/>
    <property type="evidence" value="ECO:0000250"/>
    <property type="project" value="UniProtKB"/>
</dbReference>
<dbReference type="GO" id="GO:0005739">
    <property type="term" value="C:mitochondrion"/>
    <property type="evidence" value="ECO:0007669"/>
    <property type="project" value="GOC"/>
</dbReference>
<dbReference type="GO" id="GO:0005654">
    <property type="term" value="C:nucleoplasm"/>
    <property type="evidence" value="ECO:0000304"/>
    <property type="project" value="Reactome"/>
</dbReference>
<dbReference type="GO" id="GO:0005736">
    <property type="term" value="C:RNA polymerase I complex"/>
    <property type="evidence" value="ECO:0000314"/>
    <property type="project" value="UniProtKB"/>
</dbReference>
<dbReference type="GO" id="GO:0003682">
    <property type="term" value="F:chromatin binding"/>
    <property type="evidence" value="ECO:0000314"/>
    <property type="project" value="UniProtKB"/>
</dbReference>
<dbReference type="GO" id="GO:0003677">
    <property type="term" value="F:DNA binding"/>
    <property type="evidence" value="ECO:0007669"/>
    <property type="project" value="InterPro"/>
</dbReference>
<dbReference type="GO" id="GO:0003899">
    <property type="term" value="F:DNA-directed RNA polymerase activity"/>
    <property type="evidence" value="ECO:0000314"/>
    <property type="project" value="UniProtKB"/>
</dbReference>
<dbReference type="GO" id="GO:0071667">
    <property type="term" value="F:DNA/RNA hybrid binding"/>
    <property type="evidence" value="ECO:0000314"/>
    <property type="project" value="UniProtKB"/>
</dbReference>
<dbReference type="GO" id="GO:0000287">
    <property type="term" value="F:magnesium ion binding"/>
    <property type="evidence" value="ECO:0000314"/>
    <property type="project" value="UniProtKB"/>
</dbReference>
<dbReference type="GO" id="GO:0008270">
    <property type="term" value="F:zinc ion binding"/>
    <property type="evidence" value="ECO:0000314"/>
    <property type="project" value="UniProtKB"/>
</dbReference>
<dbReference type="GO" id="GO:1904750">
    <property type="term" value="P:negative regulation of protein localization to nucleolus"/>
    <property type="evidence" value="ECO:0000315"/>
    <property type="project" value="ParkinsonsUK-UCL"/>
</dbReference>
<dbReference type="GO" id="GO:0006360">
    <property type="term" value="P:transcription by RNA polymerase I"/>
    <property type="evidence" value="ECO:0000315"/>
    <property type="project" value="ParkinsonsUK-UCL"/>
</dbReference>
<dbReference type="CDD" id="cd02735">
    <property type="entry name" value="RNAP_I_Rpa1_C"/>
    <property type="match status" value="1"/>
</dbReference>
<dbReference type="CDD" id="cd01435">
    <property type="entry name" value="RNAP_I_RPA1_N"/>
    <property type="match status" value="1"/>
</dbReference>
<dbReference type="FunFam" id="2.40.40.20:FF:000019">
    <property type="entry name" value="DNA-directed RNA polymerase II subunit RPB1"/>
    <property type="match status" value="1"/>
</dbReference>
<dbReference type="FunFam" id="1.10.132.30:FF:000004">
    <property type="entry name" value="DNA-directed RNA polymerase subunit"/>
    <property type="match status" value="1"/>
</dbReference>
<dbReference type="FunFam" id="1.10.274.100:FF:000004">
    <property type="entry name" value="DNA-directed RNA polymerase subunit"/>
    <property type="match status" value="1"/>
</dbReference>
<dbReference type="FunFam" id="3.30.1490.180:FF:000003">
    <property type="entry name" value="DNA-directed RNA polymerase subunit"/>
    <property type="match status" value="1"/>
</dbReference>
<dbReference type="FunFam" id="4.10.860.120:FF:000006">
    <property type="entry name" value="DNA-directed RNA polymerase subunit"/>
    <property type="match status" value="1"/>
</dbReference>
<dbReference type="Gene3D" id="1.10.132.30">
    <property type="match status" value="1"/>
</dbReference>
<dbReference type="Gene3D" id="1.10.357.120">
    <property type="match status" value="1"/>
</dbReference>
<dbReference type="Gene3D" id="2.40.40.20">
    <property type="match status" value="1"/>
</dbReference>
<dbReference type="Gene3D" id="3.30.70.2850">
    <property type="match status" value="1"/>
</dbReference>
<dbReference type="Gene3D" id="6.10.250.2940">
    <property type="match status" value="1"/>
</dbReference>
<dbReference type="Gene3D" id="3.30.1490.180">
    <property type="entry name" value="RNA polymerase ii"/>
    <property type="match status" value="1"/>
</dbReference>
<dbReference type="Gene3D" id="4.10.860.120">
    <property type="entry name" value="RNA polymerase II, clamp domain"/>
    <property type="match status" value="1"/>
</dbReference>
<dbReference type="Gene3D" id="1.10.274.100">
    <property type="entry name" value="RNA polymerase Rpb1, domain 3"/>
    <property type="match status" value="1"/>
</dbReference>
<dbReference type="InterPro" id="IPR047107">
    <property type="entry name" value="DNA-dir_RNA_pol1_lsu_C"/>
</dbReference>
<dbReference type="InterPro" id="IPR015699">
    <property type="entry name" value="DNA-dir_RNA_pol1_lsu_N"/>
</dbReference>
<dbReference type="InterPro" id="IPR045867">
    <property type="entry name" value="DNA-dir_RpoC_beta_prime"/>
</dbReference>
<dbReference type="InterPro" id="IPR000722">
    <property type="entry name" value="RNA_pol_asu"/>
</dbReference>
<dbReference type="InterPro" id="IPR006592">
    <property type="entry name" value="RNA_pol_N"/>
</dbReference>
<dbReference type="InterPro" id="IPR007080">
    <property type="entry name" value="RNA_pol_Rpb1_1"/>
</dbReference>
<dbReference type="InterPro" id="IPR007066">
    <property type="entry name" value="RNA_pol_Rpb1_3"/>
</dbReference>
<dbReference type="InterPro" id="IPR042102">
    <property type="entry name" value="RNA_pol_Rpb1_3_sf"/>
</dbReference>
<dbReference type="InterPro" id="IPR007083">
    <property type="entry name" value="RNA_pol_Rpb1_4"/>
</dbReference>
<dbReference type="InterPro" id="IPR007081">
    <property type="entry name" value="RNA_pol_Rpb1_5"/>
</dbReference>
<dbReference type="InterPro" id="IPR044893">
    <property type="entry name" value="RNA_pol_Rpb1_clamp_domain"/>
</dbReference>
<dbReference type="InterPro" id="IPR038120">
    <property type="entry name" value="Rpb1_funnel_sf"/>
</dbReference>
<dbReference type="PANTHER" id="PTHR19376">
    <property type="entry name" value="DNA-DIRECTED RNA POLYMERASE"/>
    <property type="match status" value="1"/>
</dbReference>
<dbReference type="PANTHER" id="PTHR19376:SF11">
    <property type="entry name" value="DNA-DIRECTED RNA POLYMERASE I SUBUNIT RPA1"/>
    <property type="match status" value="1"/>
</dbReference>
<dbReference type="Pfam" id="PF04997">
    <property type="entry name" value="RNA_pol_Rpb1_1"/>
    <property type="match status" value="1"/>
</dbReference>
<dbReference type="Pfam" id="PF00623">
    <property type="entry name" value="RNA_pol_Rpb1_2"/>
    <property type="match status" value="1"/>
</dbReference>
<dbReference type="Pfam" id="PF04983">
    <property type="entry name" value="RNA_pol_Rpb1_3"/>
    <property type="match status" value="1"/>
</dbReference>
<dbReference type="Pfam" id="PF05000">
    <property type="entry name" value="RNA_pol_Rpb1_4"/>
    <property type="match status" value="1"/>
</dbReference>
<dbReference type="Pfam" id="PF04998">
    <property type="entry name" value="RNA_pol_Rpb1_5"/>
    <property type="match status" value="1"/>
</dbReference>
<dbReference type="SMART" id="SM00663">
    <property type="entry name" value="RPOLA_N"/>
    <property type="match status" value="1"/>
</dbReference>
<dbReference type="SUPFAM" id="SSF64484">
    <property type="entry name" value="beta and beta-prime subunits of DNA dependent RNA-polymerase"/>
    <property type="match status" value="1"/>
</dbReference>
<feature type="chain" id="PRO_0000073923" description="DNA-directed RNA polymerase I subunit RPA1">
    <location>
        <begin position="1"/>
        <end position="1720"/>
    </location>
</feature>
<feature type="region of interest" description="Clamp" evidence="16">
    <location>
        <begin position="110"/>
        <end position="201"/>
    </location>
</feature>
<feature type="region of interest" description="Clamp" evidence="16">
    <location>
        <begin position="320"/>
        <end position="426"/>
    </location>
</feature>
<feature type="region of interest" description="Rudder" evidence="16">
    <location>
        <begin position="403"/>
        <end position="416"/>
    </location>
</feature>
<feature type="region of interest" description="Involved in RRN3 binding to Pol I complex" evidence="17">
    <location>
        <begin position="468"/>
        <end position="542"/>
    </location>
</feature>
<feature type="region of interest" description="Funnel" evidence="16">
    <location>
        <begin position="805"/>
        <end position="883"/>
    </location>
</feature>
<feature type="region of interest" description="Bridging helix" evidence="1 16">
    <location>
        <begin position="960"/>
        <end position="1001"/>
    </location>
</feature>
<feature type="region of interest" description="Mediates the interaction with TOP2A" evidence="18">
    <location>
        <begin position="1060"/>
        <end position="1155"/>
    </location>
</feature>
<feature type="region of interest" description="Trigger loop" evidence="1">
    <location>
        <begin position="1207"/>
        <end position="1248"/>
    </location>
</feature>
<feature type="region of interest" description="Disordered" evidence="6">
    <location>
        <begin position="1365"/>
        <end position="1498"/>
    </location>
</feature>
<feature type="compositionally biased region" description="Basic and acidic residues" evidence="6">
    <location>
        <begin position="1373"/>
        <end position="1390"/>
    </location>
</feature>
<feature type="compositionally biased region" description="Acidic residues" evidence="6">
    <location>
        <begin position="1391"/>
        <end position="1412"/>
    </location>
</feature>
<feature type="compositionally biased region" description="Acidic residues" evidence="6">
    <location>
        <begin position="1422"/>
        <end position="1446"/>
    </location>
</feature>
<feature type="compositionally biased region" description="Basic and acidic residues" evidence="6">
    <location>
        <begin position="1447"/>
        <end position="1461"/>
    </location>
</feature>
<feature type="compositionally biased region" description="Acidic residues" evidence="6">
    <location>
        <begin position="1462"/>
        <end position="1474"/>
    </location>
</feature>
<feature type="binding site" evidence="16 17 28 29">
    <location>
        <position position="64"/>
    </location>
    <ligand>
        <name>Zn(2+)</name>
        <dbReference type="ChEBI" id="CHEBI:29105"/>
        <label>1</label>
    </ligand>
</feature>
<feature type="binding site" evidence="16 17 28 29">
    <location>
        <position position="67"/>
    </location>
    <ligand>
        <name>Zn(2+)</name>
        <dbReference type="ChEBI" id="CHEBI:29105"/>
        <label>1</label>
    </ligand>
</feature>
<feature type="binding site" evidence="16 17 28 29">
    <location>
        <position position="74"/>
    </location>
    <ligand>
        <name>Zn(2+)</name>
        <dbReference type="ChEBI" id="CHEBI:29105"/>
        <label>1</label>
    </ligand>
</feature>
<feature type="binding site" evidence="17 28">
    <location>
        <position position="77"/>
    </location>
    <ligand>
        <name>Zn(2+)</name>
        <dbReference type="ChEBI" id="CHEBI:29105"/>
        <label>1</label>
    </ligand>
</feature>
<feature type="binding site" evidence="17 28">
    <location>
        <position position="104"/>
    </location>
    <ligand>
        <name>Zn(2+)</name>
        <dbReference type="ChEBI" id="CHEBI:29105"/>
        <label>2</label>
    </ligand>
</feature>
<feature type="binding site" evidence="17 28">
    <location>
        <position position="107"/>
    </location>
    <ligand>
        <name>Zn(2+)</name>
        <dbReference type="ChEBI" id="CHEBI:29105"/>
        <label>2</label>
    </ligand>
</feature>
<feature type="binding site" evidence="17 28">
    <location>
        <position position="205"/>
    </location>
    <ligand>
        <name>Zn(2+)</name>
        <dbReference type="ChEBI" id="CHEBI:29105"/>
        <label>2</label>
    </ligand>
</feature>
<feature type="binding site" evidence="17 28">
    <location>
        <position position="208"/>
    </location>
    <ligand>
        <name>Zn(2+)</name>
        <dbReference type="ChEBI" id="CHEBI:29105"/>
        <label>2</label>
    </ligand>
</feature>
<feature type="binding site" evidence="17 28">
    <location>
        <position position="424"/>
    </location>
    <ligand>
        <name>DNA</name>
        <dbReference type="ChEBI" id="CHEBI:16991"/>
        <label>template strand</label>
    </ligand>
</feature>
<feature type="binding site" evidence="16 29">
    <location>
        <position position="429"/>
    </location>
    <ligand>
        <name>DNA</name>
        <dbReference type="ChEBI" id="CHEBI:16991"/>
        <label>nontemplate strand</label>
    </ligand>
</feature>
<feature type="binding site" evidence="16 29">
    <location>
        <position position="429"/>
    </location>
    <ligand>
        <name>DNA</name>
        <dbReference type="ChEBI" id="CHEBI:16991"/>
        <label>template strand</label>
    </ligand>
</feature>
<feature type="binding site" evidence="16 17 28 29">
    <location>
        <position position="436"/>
    </location>
    <ligand>
        <name>DNA</name>
        <dbReference type="ChEBI" id="CHEBI:16991"/>
        <label>template strand</label>
    </ligand>
</feature>
<feature type="binding site" evidence="16 29">
    <location>
        <position position="552"/>
    </location>
    <ligand>
        <name>RNA</name>
        <dbReference type="ChEBI" id="CHEBI:33697"/>
    </ligand>
</feature>
<feature type="binding site" evidence="17 28">
    <location>
        <position position="588"/>
    </location>
    <ligand>
        <name>Mg(2+)</name>
        <dbReference type="ChEBI" id="CHEBI:18420"/>
        <label>1</label>
        <note>catalytic</note>
    </ligand>
</feature>
<feature type="binding site" evidence="5">
    <location>
        <position position="588"/>
    </location>
    <ligand>
        <name>Mg(2+)</name>
        <dbReference type="ChEBI" id="CHEBI:18420"/>
        <label>2</label>
        <note>ligand shared with POLR1B/RPA2</note>
    </ligand>
</feature>
<feature type="binding site" evidence="17 28">
    <location>
        <position position="590"/>
    </location>
    <ligand>
        <name>Mg(2+)</name>
        <dbReference type="ChEBI" id="CHEBI:18420"/>
        <label>1</label>
        <note>catalytic</note>
    </ligand>
</feature>
<feature type="binding site" evidence="3">
    <location>
        <position position="590"/>
    </location>
    <ligand>
        <name>Mg(2+)</name>
        <dbReference type="ChEBI" id="CHEBI:18420"/>
        <label>2</label>
        <note>ligand shared with POLR1B/RPA2</note>
    </ligand>
</feature>
<feature type="binding site" evidence="17 28">
    <location>
        <position position="592"/>
    </location>
    <ligand>
        <name>Mg(2+)</name>
        <dbReference type="ChEBI" id="CHEBI:18420"/>
        <label>1</label>
        <note>catalytic</note>
    </ligand>
</feature>
<feature type="binding site" evidence="16 29">
    <location>
        <position position="592"/>
    </location>
    <ligand>
        <name>RNA</name>
        <dbReference type="ChEBI" id="CHEBI:33697"/>
    </ligand>
</feature>
<feature type="binding site" evidence="17 28">
    <location>
        <position position="1249"/>
    </location>
    <ligand>
        <name>DNA</name>
        <dbReference type="ChEBI" id="CHEBI:16991"/>
        <label>template strand</label>
    </ligand>
</feature>
<feature type="site" description="NTP recognition and base pairing" evidence="16">
    <location>
        <position position="554"/>
    </location>
</feature>
<feature type="site" description="NTP recognition and base pairing" evidence="16">
    <location>
        <position position="798"/>
    </location>
</feature>
<feature type="modified residue" description="Phosphoserine" evidence="31">
    <location>
        <position position="240"/>
    </location>
</feature>
<feature type="modified residue" description="Phosphoserine" evidence="30">
    <location>
        <position position="1386"/>
    </location>
</feature>
<feature type="sequence variant" id="VAR_089261" description="In AFDCIN; uncertain significance; results in increased rRNA transcription in transfected cells; dbSNP:rs1057524435." evidence="20">
    <original>D</original>
    <variation>V</variation>
    <location>
        <position position="59"/>
    </location>
</feature>
<feature type="sequence variant" id="VAR_047493" description="In dbSNP:rs4832242." evidence="21 22">
    <original>P</original>
    <variation>A</variation>
    <location>
        <position position="150"/>
    </location>
</feature>
<feature type="sequence variant" id="VAR_047494" description="In dbSNP:rs17026866.">
    <original>Q</original>
    <variation>E</variation>
    <location>
        <position position="349"/>
    </location>
</feature>
<feature type="sequence variant" id="VAR_047495" description="In dbSNP:rs35239368.">
    <original>K</original>
    <variation>E</variation>
    <location>
        <position position="364"/>
    </location>
</feature>
<feature type="sequence variant" id="VAR_089262" description="In AFDCIN; uncertain significance; results in decreased rRNA transcription in transfected cells; dbSNP:rs942408597." evidence="20">
    <original>R</original>
    <variation>H</variation>
    <location>
        <position position="393"/>
    </location>
</feature>
<feature type="sequence variant" id="VAR_047496" description="In dbSNP:rs35443467.">
    <original>S</original>
    <variation>N</variation>
    <location>
        <position position="396"/>
    </location>
</feature>
<feature type="sequence variant" id="VAR_089263" description="In AFDCIN; uncertain significance; dbSNP:rs1447279384." evidence="20">
    <original>R</original>
    <variation>K</variation>
    <location>
        <position position="481"/>
    </location>
</feature>
<feature type="sequence variant" id="VAR_089264" description="In AFDCIN; likely pathogenic." evidence="20">
    <original>M</original>
    <variation>I</variation>
    <location>
        <position position="496"/>
    </location>
</feature>
<feature type="sequence variant" id="VAR_073964" description="In AFDCIN; likely pathogenic; results in decreased rRNA transcription in transfected cells; dbSNP:rs794729674." evidence="12 20">
    <original>E</original>
    <variation>Q</variation>
    <location>
        <position position="593"/>
    </location>
</feature>
<feature type="sequence variant" id="VAR_089265" description="In HLD27; likely pathogenic; decreased protein abundance in homozygous patient cells; results in aberrant rRNA processing in homozygous patient cells; dbSNP:rs750690447." evidence="19">
    <original>T</original>
    <variation>N</variation>
    <location>
        <position position="642"/>
    </location>
</feature>
<feature type="sequence variant" id="VAR_047497" description="In dbSNP:rs34302587.">
    <original>I</original>
    <variation>V</variation>
    <location>
        <position position="815"/>
    </location>
</feature>
<feature type="sequence variant" id="VAR_089266" description="In HLD27; uncertain significance; decreased protein abundance in homozygous patient cells." evidence="15">
    <original>S</original>
    <variation>L</variation>
    <location>
        <position position="934"/>
    </location>
</feature>
<feature type="sequence variant" id="VAR_047498" description="In dbSNP:rs34892520.">
    <original>A</original>
    <variation>T</variation>
    <location>
        <position position="1141"/>
    </location>
</feature>
<feature type="sequence variant" id="VAR_089267" description="In AFDCIN; likely pathogenic." evidence="20">
    <original>V</original>
    <variation>I</variation>
    <location>
        <position position="1241"/>
    </location>
</feature>
<feature type="sequence variant" id="VAR_089268" description="In AFDCIN; uncertain significance." evidence="20">
    <location>
        <begin position="1284"/>
        <end position="1720"/>
    </location>
</feature>
<feature type="sequence variant" id="VAR_073965" description="In AFDCIN; uncertain significance; dbSNP:rs751377255." evidence="12">
    <original>V</original>
    <variation>F</variation>
    <location>
        <position position="1299"/>
    </location>
</feature>
<feature type="sequence variant" id="VAR_089269" description="In AFDCIN; pathogenic; results in increased rRNA transcription in transfected cells; dbSNP:rs1064794956." evidence="20">
    <location>
        <position position="1330"/>
    </location>
</feature>
<feature type="sequence variant" id="VAR_089270" description="In AFDCIN; pathogenic; results in increased rRNA transcription in transfected cells; dbSNP:rs1064795108." evidence="20">
    <original>C</original>
    <variation>F</variation>
    <location>
        <position position="1562"/>
    </location>
</feature>
<feature type="sequence variant" id="VAR_047499" description="In dbSNP:rs35093541.">
    <original>I</original>
    <variation>M</variation>
    <location>
        <position position="1608"/>
    </location>
</feature>
<feature type="sequence variant" id="VAR_089271" description="In AFDCIN; uncertain significance; dbSNP:rs183821257." evidence="20">
    <original>V</original>
    <variation>M</variation>
    <location>
        <position position="1631"/>
    </location>
</feature>
<feature type="sequence variant" id="VAR_089272" description="In AFDCIN; uncertain significance." evidence="20">
    <original>P</original>
    <variation>L</variation>
    <location>
        <position position="1638"/>
    </location>
</feature>
<feature type="sequence conflict" description="In Ref. 1; AAC99959." evidence="25" ref="1">
    <original>N</original>
    <variation>S</variation>
    <location>
        <position position="143"/>
    </location>
</feature>
<feature type="sequence conflict" description="In Ref. 1; AAC99959." evidence="25" ref="1">
    <original>Y</original>
    <variation>S</variation>
    <location>
        <position position="309"/>
    </location>
</feature>
<feature type="sequence conflict" description="In Ref. 1; AAC99959." evidence="25" ref="1">
    <original>M</original>
    <variation>R</variation>
    <location>
        <position position="411"/>
    </location>
</feature>
<feature type="sequence conflict" description="In Ref. 1; AAC99959." evidence="25" ref="1">
    <original>YA</original>
    <variation>ST</variation>
    <location>
        <begin position="439"/>
        <end position="440"/>
    </location>
</feature>
<feature type="sequence conflict" description="In Ref. 1; AAC99959." evidence="25" ref="1">
    <original>A</original>
    <variation>R</variation>
    <location>
        <position position="808"/>
    </location>
</feature>
<feature type="sequence conflict" description="In Ref. 1; AAC99959." evidence="25" ref="1">
    <original>S</original>
    <variation>T</variation>
    <location>
        <position position="893"/>
    </location>
</feature>
<feature type="sequence conflict" description="In Ref. 1; AAC99959." evidence="25" ref="1">
    <original>M</original>
    <variation>L</variation>
    <location>
        <position position="896"/>
    </location>
</feature>
<feature type="sequence conflict" description="In Ref. 1; AAC99959." evidence="25" ref="1">
    <original>RP</original>
    <variation>ST</variation>
    <location>
        <begin position="925"/>
        <end position="926"/>
    </location>
</feature>
<feature type="sequence conflict" description="In Ref. 1; AAD09356." evidence="25" ref="1">
    <original>G</original>
    <variation>A</variation>
    <location>
        <position position="986"/>
    </location>
</feature>
<feature type="sequence conflict" description="In Ref. 1; AAD09356." evidence="25" ref="1">
    <original>RAT</original>
    <variation>TRI</variation>
    <location>
        <begin position="1371"/>
        <end position="1373"/>
    </location>
</feature>
<feature type="sequence conflict" description="In Ref. 1; AAC99959." evidence="25" ref="1">
    <location>
        <begin position="1470"/>
        <end position="1471"/>
    </location>
</feature>
<feature type="sequence conflict" description="In Ref. 1; AAC99959." evidence="25" ref="1">
    <location>
        <position position="1616"/>
    </location>
</feature>
<feature type="strand" evidence="32">
    <location>
        <begin position="11"/>
        <end position="19"/>
    </location>
</feature>
<feature type="helix" evidence="32">
    <location>
        <begin position="22"/>
        <end position="28"/>
    </location>
</feature>
<feature type="strand" evidence="32">
    <location>
        <begin position="43"/>
        <end position="45"/>
    </location>
</feature>
<feature type="strand" evidence="32">
    <location>
        <begin position="47"/>
        <end position="49"/>
    </location>
</feature>
<feature type="strand" evidence="33">
    <location>
        <begin position="58"/>
        <end position="62"/>
    </location>
</feature>
<feature type="strand" evidence="32">
    <location>
        <begin position="65"/>
        <end position="67"/>
    </location>
</feature>
<feature type="turn" evidence="32">
    <location>
        <begin position="71"/>
        <end position="73"/>
    </location>
</feature>
<feature type="strand" evidence="32">
    <location>
        <begin position="79"/>
        <end position="88"/>
    </location>
</feature>
<feature type="strand" evidence="33">
    <location>
        <begin position="90"/>
        <end position="92"/>
    </location>
</feature>
<feature type="helix" evidence="32">
    <location>
        <begin position="93"/>
        <end position="101"/>
    </location>
</feature>
<feature type="strand" evidence="32">
    <location>
        <begin position="105"/>
        <end position="107"/>
    </location>
</feature>
<feature type="strand" evidence="34">
    <location>
        <begin position="110"/>
        <end position="112"/>
    </location>
</feature>
<feature type="helix" evidence="32">
    <location>
        <begin position="114"/>
        <end position="128"/>
    </location>
</feature>
<feature type="helix" evidence="32">
    <location>
        <begin position="134"/>
        <end position="148"/>
    </location>
</feature>
<feature type="helix" evidence="32">
    <location>
        <begin position="161"/>
        <end position="171"/>
    </location>
</feature>
<feature type="turn" evidence="34">
    <location>
        <begin position="173"/>
        <end position="176"/>
    </location>
</feature>
<feature type="helix" evidence="32">
    <location>
        <begin position="182"/>
        <end position="198"/>
    </location>
</feature>
<feature type="turn" evidence="32">
    <location>
        <begin position="206"/>
        <end position="208"/>
    </location>
</feature>
<feature type="strand" evidence="32">
    <location>
        <begin position="215"/>
        <end position="218"/>
    </location>
</feature>
<feature type="turn" evidence="32">
    <location>
        <begin position="219"/>
        <end position="221"/>
    </location>
</feature>
<feature type="strand" evidence="32">
    <location>
        <begin position="222"/>
        <end position="225"/>
    </location>
</feature>
<feature type="helix" evidence="32">
    <location>
        <begin position="258"/>
        <end position="279"/>
    </location>
</feature>
<feature type="helix" evidence="33">
    <location>
        <begin position="285"/>
        <end position="287"/>
    </location>
</feature>
<feature type="helix" evidence="32">
    <location>
        <begin position="294"/>
        <end position="297"/>
    </location>
</feature>
<feature type="strand" evidence="32">
    <location>
        <begin position="298"/>
        <end position="304"/>
    </location>
</feature>
<feature type="helix" evidence="32">
    <location>
        <begin position="307"/>
        <end position="309"/>
    </location>
</feature>
<feature type="strand" evidence="34">
    <location>
        <begin position="315"/>
        <end position="318"/>
    </location>
</feature>
<feature type="helix" evidence="32">
    <location>
        <begin position="323"/>
        <end position="345"/>
    </location>
</feature>
<feature type="strand" evidence="34">
    <location>
        <begin position="378"/>
        <end position="380"/>
    </location>
</feature>
<feature type="strand" evidence="32">
    <location>
        <begin position="382"/>
        <end position="384"/>
    </location>
</feature>
<feature type="helix" evidence="32">
    <location>
        <begin position="387"/>
        <end position="402"/>
    </location>
</feature>
<feature type="turn" evidence="32">
    <location>
        <begin position="404"/>
        <end position="406"/>
    </location>
</feature>
<feature type="helix" evidence="32">
    <location>
        <begin position="417"/>
        <end position="421"/>
    </location>
</feature>
<feature type="helix" evidence="32">
    <location>
        <begin position="428"/>
        <end position="431"/>
    </location>
</feature>
<feature type="strand" evidence="32">
    <location>
        <begin position="433"/>
        <end position="447"/>
    </location>
</feature>
<feature type="strand" evidence="32">
    <location>
        <begin position="449"/>
        <end position="451"/>
    </location>
</feature>
<feature type="strand" evidence="32">
    <location>
        <begin position="455"/>
        <end position="459"/>
    </location>
</feature>
<feature type="helix" evidence="32">
    <location>
        <begin position="460"/>
        <end position="463"/>
    </location>
</feature>
<feature type="strand" evidence="32">
    <location>
        <begin position="467"/>
        <end position="471"/>
    </location>
</feature>
<feature type="strand" evidence="33">
    <location>
        <begin position="474"/>
        <end position="476"/>
    </location>
</feature>
<feature type="helix" evidence="32">
    <location>
        <begin position="477"/>
        <end position="486"/>
    </location>
</feature>
<feature type="strand" evidence="32">
    <location>
        <begin position="490"/>
        <end position="492"/>
    </location>
</feature>
<feature type="strand" evidence="32">
    <location>
        <begin position="494"/>
        <end position="498"/>
    </location>
</feature>
<feature type="strand" evidence="33">
    <location>
        <begin position="500"/>
        <end position="502"/>
    </location>
</feature>
<feature type="strand" evidence="32">
    <location>
        <begin position="504"/>
        <end position="506"/>
    </location>
</feature>
<feature type="helix" evidence="32">
    <location>
        <begin position="512"/>
        <end position="521"/>
    </location>
</feature>
<feature type="strand" evidence="32">
    <location>
        <begin position="528"/>
        <end position="530"/>
    </location>
</feature>
<feature type="strand" evidence="32">
    <location>
        <begin position="537"/>
        <end position="541"/>
    </location>
</feature>
<feature type="strand" evidence="32">
    <location>
        <begin position="547"/>
        <end position="551"/>
    </location>
</feature>
<feature type="helix" evidence="32">
    <location>
        <begin position="558"/>
        <end position="560"/>
    </location>
</feature>
<feature type="strand" evidence="32">
    <location>
        <begin position="561"/>
        <end position="571"/>
    </location>
</feature>
<feature type="strand" evidence="32">
    <location>
        <begin position="574"/>
        <end position="577"/>
    </location>
</feature>
<feature type="helix" evidence="32">
    <location>
        <begin position="579"/>
        <end position="581"/>
    </location>
</feature>
<feature type="helix" evidence="32">
    <location>
        <begin position="582"/>
        <end position="585"/>
    </location>
</feature>
<feature type="strand" evidence="32">
    <location>
        <begin position="589"/>
        <end position="591"/>
    </location>
</feature>
<feature type="strand" evidence="32">
    <location>
        <begin position="593"/>
        <end position="597"/>
    </location>
</feature>
<feature type="helix" evidence="32">
    <location>
        <begin position="602"/>
        <end position="610"/>
    </location>
</feature>
<feature type="helix" evidence="32">
    <location>
        <begin position="614"/>
        <end position="616"/>
    </location>
</feature>
<feature type="turn" evidence="32">
    <location>
        <begin position="621"/>
        <end position="623"/>
    </location>
</feature>
<feature type="helix" evidence="32">
    <location>
        <begin position="632"/>
        <end position="641"/>
    </location>
</feature>
<feature type="helix" evidence="32">
    <location>
        <begin position="650"/>
        <end position="660"/>
    </location>
</feature>
<feature type="strand" evidence="32">
    <location>
        <begin position="674"/>
        <end position="679"/>
    </location>
</feature>
<feature type="strand" evidence="32">
    <location>
        <begin position="681"/>
        <end position="683"/>
    </location>
</feature>
<feature type="helix" evidence="32">
    <location>
        <begin position="684"/>
        <end position="693"/>
    </location>
</feature>
<feature type="strand" evidence="33">
    <location>
        <begin position="698"/>
        <end position="700"/>
    </location>
</feature>
<feature type="strand" evidence="32">
    <location>
        <begin position="705"/>
        <end position="707"/>
    </location>
</feature>
<feature type="helix" evidence="32">
    <location>
        <begin position="713"/>
        <end position="715"/>
    </location>
</feature>
<feature type="helix" evidence="32">
    <location>
        <begin position="729"/>
        <end position="731"/>
    </location>
</feature>
<feature type="strand" evidence="32">
    <location>
        <begin position="736"/>
        <end position="740"/>
    </location>
</feature>
<feature type="strand" evidence="32">
    <location>
        <begin position="743"/>
        <end position="747"/>
    </location>
</feature>
<feature type="turn" evidence="32">
    <location>
        <begin position="751"/>
        <end position="754"/>
    </location>
</feature>
<feature type="strand" evidence="34">
    <location>
        <begin position="758"/>
        <end position="760"/>
    </location>
</feature>
<feature type="helix" evidence="32">
    <location>
        <begin position="761"/>
        <end position="768"/>
    </location>
</feature>
<feature type="helix" evidence="32">
    <location>
        <begin position="771"/>
        <end position="791"/>
    </location>
</feature>
<feature type="turn" evidence="32">
    <location>
        <begin position="800"/>
        <end position="802"/>
    </location>
</feature>
<feature type="helix" evidence="32">
    <location>
        <begin position="806"/>
        <end position="819"/>
    </location>
</feature>
<feature type="helix" evidence="32">
    <location>
        <begin position="824"/>
        <end position="831"/>
    </location>
</feature>
<feature type="helix" evidence="32">
    <location>
        <begin position="839"/>
        <end position="849"/>
    </location>
</feature>
<feature type="strand" evidence="34">
    <location>
        <begin position="850"/>
        <end position="853"/>
    </location>
</feature>
<feature type="helix" evidence="32">
    <location>
        <begin position="857"/>
        <end position="880"/>
    </location>
</feature>
<feature type="strand" evidence="32">
    <location>
        <begin position="881"/>
        <end position="887"/>
    </location>
</feature>
<feature type="turn" evidence="32">
    <location>
        <begin position="889"/>
        <end position="891"/>
    </location>
</feature>
<feature type="helix" evidence="32">
    <location>
        <begin position="893"/>
        <end position="899"/>
    </location>
</feature>
<feature type="helix" evidence="32">
    <location>
        <begin position="906"/>
        <end position="913"/>
    </location>
</feature>
<feature type="helix" evidence="32">
    <location>
        <begin position="945"/>
        <end position="948"/>
    </location>
</feature>
<feature type="turn" evidence="32">
    <location>
        <begin position="955"/>
        <end position="957"/>
    </location>
</feature>
<feature type="helix" evidence="32">
    <location>
        <begin position="961"/>
        <end position="996"/>
    </location>
</feature>
<feature type="strand" evidence="32">
    <location>
        <begin position="1003"/>
        <end position="1005"/>
    </location>
</feature>
<feature type="strand" evidence="32">
    <location>
        <begin position="1014"/>
        <end position="1018"/>
    </location>
</feature>
<feature type="helix" evidence="32">
    <location>
        <begin position="1019"/>
        <end position="1021"/>
    </location>
</feature>
<feature type="helix" evidence="32">
    <location>
        <begin position="1026"/>
        <end position="1028"/>
    </location>
</feature>
<feature type="turn" evidence="32">
    <location>
        <begin position="1034"/>
        <end position="1036"/>
    </location>
</feature>
<feature type="helix" evidence="32">
    <location>
        <begin position="1037"/>
        <end position="1041"/>
    </location>
</feature>
<feature type="helix" evidence="32">
    <location>
        <begin position="1044"/>
        <end position="1048"/>
    </location>
</feature>
<feature type="turn" evidence="34">
    <location>
        <begin position="1054"/>
        <end position="1056"/>
    </location>
</feature>
<feature type="strand" evidence="32">
    <location>
        <begin position="1057"/>
        <end position="1059"/>
    </location>
</feature>
<feature type="helix" evidence="32">
    <location>
        <begin position="1063"/>
        <end position="1078"/>
    </location>
</feature>
<feature type="strand" evidence="32">
    <location>
        <begin position="1082"/>
        <end position="1084"/>
    </location>
</feature>
<feature type="helix" evidence="32">
    <location>
        <begin position="1088"/>
        <end position="1094"/>
    </location>
</feature>
<feature type="helix" evidence="32">
    <location>
        <begin position="1098"/>
        <end position="1101"/>
    </location>
</feature>
<feature type="strand" evidence="32">
    <location>
        <begin position="1110"/>
        <end position="1112"/>
    </location>
</feature>
<feature type="helix" evidence="32">
    <location>
        <begin position="1115"/>
        <end position="1125"/>
    </location>
</feature>
<feature type="strand" evidence="32">
    <location>
        <begin position="1129"/>
        <end position="1131"/>
    </location>
</feature>
<feature type="helix" evidence="32">
    <location>
        <begin position="1132"/>
        <end position="1137"/>
    </location>
</feature>
<feature type="helix" evidence="32">
    <location>
        <begin position="1146"/>
        <end position="1149"/>
    </location>
</feature>
<feature type="turn" evidence="32">
    <location>
        <begin position="1152"/>
        <end position="1154"/>
    </location>
</feature>
<feature type="helix" evidence="32">
    <location>
        <begin position="1161"/>
        <end position="1180"/>
    </location>
</feature>
<feature type="strand" evidence="32">
    <location>
        <begin position="1181"/>
        <end position="1183"/>
    </location>
</feature>
<feature type="helix" evidence="32">
    <location>
        <begin position="1189"/>
        <end position="1202"/>
    </location>
</feature>
<feature type="helix" evidence="32">
    <location>
        <begin position="1211"/>
        <end position="1220"/>
    </location>
</feature>
<feature type="helix" evidence="32">
    <location>
        <begin position="1222"/>
        <end position="1225"/>
    </location>
</feature>
<feature type="turn" evidence="32">
    <location>
        <begin position="1235"/>
        <end position="1237"/>
    </location>
</feature>
<feature type="helix" evidence="32">
    <location>
        <begin position="1244"/>
        <end position="1252"/>
    </location>
</feature>
<feature type="strand" evidence="32">
    <location>
        <begin position="1264"/>
        <end position="1268"/>
    </location>
</feature>
<feature type="helix" evidence="32">
    <location>
        <begin position="1272"/>
        <end position="1285"/>
    </location>
</feature>
<feature type="helix" evidence="32">
    <location>
        <begin position="1290"/>
        <end position="1293"/>
    </location>
</feature>
<feature type="strand" evidence="32">
    <location>
        <begin position="1294"/>
        <end position="1299"/>
    </location>
</feature>
<feature type="strand" evidence="32">
    <location>
        <begin position="1302"/>
        <end position="1304"/>
    </location>
</feature>
<feature type="strand" evidence="32">
    <location>
        <begin position="1307"/>
        <end position="1309"/>
    </location>
</feature>
<feature type="strand" evidence="32">
    <location>
        <begin position="1312"/>
        <end position="1314"/>
    </location>
</feature>
<feature type="strand" evidence="32">
    <location>
        <begin position="1317"/>
        <end position="1321"/>
    </location>
</feature>
<feature type="helix" evidence="32">
    <location>
        <begin position="1324"/>
        <end position="1326"/>
    </location>
</feature>
<feature type="turn" evidence="32">
    <location>
        <begin position="1328"/>
        <end position="1330"/>
    </location>
</feature>
<feature type="helix" evidence="32">
    <location>
        <begin position="1335"/>
        <end position="1344"/>
    </location>
</feature>
<feature type="helix" evidence="32">
    <location>
        <begin position="1346"/>
        <end position="1358"/>
    </location>
</feature>
<feature type="helix" evidence="32">
    <location>
        <begin position="1500"/>
        <end position="1506"/>
    </location>
</feature>
<feature type="strand" evidence="32">
    <location>
        <begin position="1514"/>
        <end position="1517"/>
    </location>
</feature>
<feature type="turn" evidence="32">
    <location>
        <begin position="1519"/>
        <end position="1521"/>
    </location>
</feature>
<feature type="strand" evidence="32">
    <location>
        <begin position="1524"/>
        <end position="1528"/>
    </location>
</feature>
<feature type="strand" evidence="33">
    <location>
        <begin position="1529"/>
        <end position="1531"/>
    </location>
</feature>
<feature type="helix" evidence="32">
    <location>
        <begin position="1540"/>
        <end position="1550"/>
    </location>
</feature>
<feature type="strand" evidence="32">
    <location>
        <begin position="1552"/>
        <end position="1554"/>
    </location>
</feature>
<feature type="strand" evidence="32">
    <location>
        <begin position="1559"/>
        <end position="1566"/>
    </location>
</feature>
<feature type="strand" evidence="32">
    <location>
        <begin position="1570"/>
        <end position="1572"/>
    </location>
</feature>
<feature type="strand" evidence="32">
    <location>
        <begin position="1577"/>
        <end position="1582"/>
    </location>
</feature>
<feature type="helix" evidence="32">
    <location>
        <begin position="1585"/>
        <end position="1587"/>
    </location>
</feature>
<feature type="strand" evidence="34">
    <location>
        <begin position="1588"/>
        <end position="1590"/>
    </location>
</feature>
<feature type="turn" evidence="32">
    <location>
        <begin position="1592"/>
        <end position="1594"/>
    </location>
</feature>
<feature type="helix" evidence="32">
    <location>
        <begin position="1597"/>
        <end position="1599"/>
    </location>
</feature>
<feature type="strand" evidence="32">
    <location>
        <begin position="1601"/>
        <end position="1603"/>
    </location>
</feature>
<feature type="helix" evidence="32">
    <location>
        <begin position="1605"/>
        <end position="1611"/>
    </location>
</feature>
<feature type="helix" evidence="32">
    <location>
        <begin position="1614"/>
        <end position="1629"/>
    </location>
</feature>
<feature type="turn" evidence="32">
    <location>
        <begin position="1630"/>
        <end position="1633"/>
    </location>
</feature>
<feature type="helix" evidence="32">
    <location>
        <begin position="1638"/>
        <end position="1648"/>
    </location>
</feature>
<feature type="turn" evidence="32">
    <location>
        <begin position="1649"/>
        <end position="1651"/>
    </location>
</feature>
<feature type="turn" evidence="32">
    <location>
        <begin position="1659"/>
        <end position="1661"/>
    </location>
</feature>
<feature type="helix" evidence="32">
    <location>
        <begin position="1662"/>
        <end position="1664"/>
    </location>
</feature>
<feature type="helix" evidence="32">
    <location>
        <begin position="1668"/>
        <end position="1674"/>
    </location>
</feature>
<feature type="helix" evidence="32">
    <location>
        <begin position="1677"/>
        <end position="1687"/>
    </location>
</feature>
<feature type="helix" evidence="32">
    <location>
        <begin position="1696"/>
        <end position="1701"/>
    </location>
</feature>
<feature type="strand" evidence="32">
    <location>
        <begin position="1707"/>
        <end position="1709"/>
    </location>
</feature>
<feature type="strand" evidence="32">
    <location>
        <begin position="1712"/>
        <end position="1718"/>
    </location>
</feature>
<proteinExistence type="evidence at protein level"/>
<accession>O95602</accession>
<accession>B7Z7T0</accession>
<accession>D6W5M0</accession>
<accession>Q0VG05</accession>
<accession>Q9UEH0</accession>
<accession>Q9UFT9</accession>
<reference key="1">
    <citation type="submission" date="1995-08" db="EMBL/GenBank/DDBJ databases">
        <authorList>
            <person name="Wang D."/>
            <person name="Stetler D.A."/>
        </authorList>
    </citation>
    <scope>NUCLEOTIDE SEQUENCE [MRNA]</scope>
    <scope>VARIANT ALA-150</scope>
</reference>
<reference key="2">
    <citation type="journal article" date="2004" name="Nat. Genet.">
        <title>Complete sequencing and characterization of 21,243 full-length human cDNAs.</title>
        <authorList>
            <person name="Ota T."/>
            <person name="Suzuki Y."/>
            <person name="Nishikawa T."/>
            <person name="Otsuki T."/>
            <person name="Sugiyama T."/>
            <person name="Irie R."/>
            <person name="Wakamatsu A."/>
            <person name="Hayashi K."/>
            <person name="Sato H."/>
            <person name="Nagai K."/>
            <person name="Kimura K."/>
            <person name="Makita H."/>
            <person name="Sekine M."/>
            <person name="Obayashi M."/>
            <person name="Nishi T."/>
            <person name="Shibahara T."/>
            <person name="Tanaka T."/>
            <person name="Ishii S."/>
            <person name="Yamamoto J."/>
            <person name="Saito K."/>
            <person name="Kawai Y."/>
            <person name="Isono Y."/>
            <person name="Nakamura Y."/>
            <person name="Nagahari K."/>
            <person name="Murakami K."/>
            <person name="Yasuda T."/>
            <person name="Iwayanagi T."/>
            <person name="Wagatsuma M."/>
            <person name="Shiratori A."/>
            <person name="Sudo H."/>
            <person name="Hosoiri T."/>
            <person name="Kaku Y."/>
            <person name="Kodaira H."/>
            <person name="Kondo H."/>
            <person name="Sugawara M."/>
            <person name="Takahashi M."/>
            <person name="Kanda K."/>
            <person name="Yokoi T."/>
            <person name="Furuya T."/>
            <person name="Kikkawa E."/>
            <person name="Omura Y."/>
            <person name="Abe K."/>
            <person name="Kamihara K."/>
            <person name="Katsuta N."/>
            <person name="Sato K."/>
            <person name="Tanikawa M."/>
            <person name="Yamazaki M."/>
            <person name="Ninomiya K."/>
            <person name="Ishibashi T."/>
            <person name="Yamashita H."/>
            <person name="Murakawa K."/>
            <person name="Fujimori K."/>
            <person name="Tanai H."/>
            <person name="Kimata M."/>
            <person name="Watanabe M."/>
            <person name="Hiraoka S."/>
            <person name="Chiba Y."/>
            <person name="Ishida S."/>
            <person name="Ono Y."/>
            <person name="Takiguchi S."/>
            <person name="Watanabe S."/>
            <person name="Yosida M."/>
            <person name="Hotuta T."/>
            <person name="Kusano J."/>
            <person name="Kanehori K."/>
            <person name="Takahashi-Fujii A."/>
            <person name="Hara H."/>
            <person name="Tanase T.-O."/>
            <person name="Nomura Y."/>
            <person name="Togiya S."/>
            <person name="Komai F."/>
            <person name="Hara R."/>
            <person name="Takeuchi K."/>
            <person name="Arita M."/>
            <person name="Imose N."/>
            <person name="Musashino K."/>
            <person name="Yuuki H."/>
            <person name="Oshima A."/>
            <person name="Sasaki N."/>
            <person name="Aotsuka S."/>
            <person name="Yoshikawa Y."/>
            <person name="Matsunawa H."/>
            <person name="Ichihara T."/>
            <person name="Shiohata N."/>
            <person name="Sano S."/>
            <person name="Moriya S."/>
            <person name="Momiyama H."/>
            <person name="Satoh N."/>
            <person name="Takami S."/>
            <person name="Terashima Y."/>
            <person name="Suzuki O."/>
            <person name="Nakagawa S."/>
            <person name="Senoh A."/>
            <person name="Mizoguchi H."/>
            <person name="Goto Y."/>
            <person name="Shimizu F."/>
            <person name="Wakebe H."/>
            <person name="Hishigaki H."/>
            <person name="Watanabe T."/>
            <person name="Sugiyama A."/>
            <person name="Takemoto M."/>
            <person name="Kawakami B."/>
            <person name="Yamazaki M."/>
            <person name="Watanabe K."/>
            <person name="Kumagai A."/>
            <person name="Itakura S."/>
            <person name="Fukuzumi Y."/>
            <person name="Fujimori Y."/>
            <person name="Komiyama M."/>
            <person name="Tashiro H."/>
            <person name="Tanigami A."/>
            <person name="Fujiwara T."/>
            <person name="Ono T."/>
            <person name="Yamada K."/>
            <person name="Fujii Y."/>
            <person name="Ozaki K."/>
            <person name="Hirao M."/>
            <person name="Ohmori Y."/>
            <person name="Kawabata A."/>
            <person name="Hikiji T."/>
            <person name="Kobatake N."/>
            <person name="Inagaki H."/>
            <person name="Ikema Y."/>
            <person name="Okamoto S."/>
            <person name="Okitani R."/>
            <person name="Kawakami T."/>
            <person name="Noguchi S."/>
            <person name="Itoh T."/>
            <person name="Shigeta K."/>
            <person name="Senba T."/>
            <person name="Matsumura K."/>
            <person name="Nakajima Y."/>
            <person name="Mizuno T."/>
            <person name="Morinaga M."/>
            <person name="Sasaki M."/>
            <person name="Togashi T."/>
            <person name="Oyama M."/>
            <person name="Hata H."/>
            <person name="Watanabe M."/>
            <person name="Komatsu T."/>
            <person name="Mizushima-Sugano J."/>
            <person name="Satoh T."/>
            <person name="Shirai Y."/>
            <person name="Takahashi Y."/>
            <person name="Nakagawa K."/>
            <person name="Okumura K."/>
            <person name="Nagase T."/>
            <person name="Nomura N."/>
            <person name="Kikuchi H."/>
            <person name="Masuho Y."/>
            <person name="Yamashita R."/>
            <person name="Nakai K."/>
            <person name="Yada T."/>
            <person name="Nakamura Y."/>
            <person name="Ohara O."/>
            <person name="Isogai T."/>
            <person name="Sugano S."/>
        </authorList>
    </citation>
    <scope>NUCLEOTIDE SEQUENCE [LARGE SCALE MRNA]</scope>
    <source>
        <tissue>Testis</tissue>
    </source>
</reference>
<reference key="3">
    <citation type="submission" date="2005-09" db="EMBL/GenBank/DDBJ databases">
        <authorList>
            <person name="Mural R.J."/>
            <person name="Istrail S."/>
            <person name="Sutton G.G."/>
            <person name="Florea L."/>
            <person name="Halpern A.L."/>
            <person name="Mobarry C.M."/>
            <person name="Lippert R."/>
            <person name="Walenz B."/>
            <person name="Shatkay H."/>
            <person name="Dew I."/>
            <person name="Miller J.R."/>
            <person name="Flanigan M.J."/>
            <person name="Edwards N.J."/>
            <person name="Bolanos R."/>
            <person name="Fasulo D."/>
            <person name="Halldorsson B.V."/>
            <person name="Hannenhalli S."/>
            <person name="Turner R."/>
            <person name="Yooseph S."/>
            <person name="Lu F."/>
            <person name="Nusskern D.R."/>
            <person name="Shue B.C."/>
            <person name="Zheng X.H."/>
            <person name="Zhong F."/>
            <person name="Delcher A.L."/>
            <person name="Huson D.H."/>
            <person name="Kravitz S.A."/>
            <person name="Mouchard L."/>
            <person name="Reinert K."/>
            <person name="Remington K.A."/>
            <person name="Clark A.G."/>
            <person name="Waterman M.S."/>
            <person name="Eichler E.E."/>
            <person name="Adams M.D."/>
            <person name="Hunkapiller M.W."/>
            <person name="Myers E.W."/>
            <person name="Venter J.C."/>
        </authorList>
    </citation>
    <scope>NUCLEOTIDE SEQUENCE [LARGE SCALE GENOMIC DNA]</scope>
    <scope>VARIANT ALA-150</scope>
</reference>
<reference key="4">
    <citation type="journal article" date="2004" name="Genome Res.">
        <title>The status, quality, and expansion of the NIH full-length cDNA project: the Mammalian Gene Collection (MGC).</title>
        <authorList>
            <consortium name="The MGC Project Team"/>
        </authorList>
    </citation>
    <scope>NUCLEOTIDE SEQUENCE [LARGE SCALE MRNA]</scope>
    <source>
        <tissue>Colon</tissue>
    </source>
</reference>
<reference key="5">
    <citation type="journal article" date="2007" name="BMC Genomics">
        <title>The full-ORF clone resource of the German cDNA consortium.</title>
        <authorList>
            <person name="Bechtel S."/>
            <person name="Rosenfelder H."/>
            <person name="Duda A."/>
            <person name="Schmidt C.P."/>
            <person name="Ernst U."/>
            <person name="Wellenreuther R."/>
            <person name="Mehrle A."/>
            <person name="Schuster C."/>
            <person name="Bahr A."/>
            <person name="Bloecker H."/>
            <person name="Heubner D."/>
            <person name="Hoerlein A."/>
            <person name="Michel G."/>
            <person name="Wedler H."/>
            <person name="Koehrer K."/>
            <person name="Ottenwaelder B."/>
            <person name="Poustka A."/>
            <person name="Wiemann S."/>
            <person name="Schupp I."/>
        </authorList>
    </citation>
    <scope>NUCLEOTIDE SEQUENCE [LARGE SCALE MRNA] OF 1626-1720</scope>
    <source>
        <tissue>Uterus</tissue>
    </source>
</reference>
<reference key="6">
    <citation type="journal article" date="2001" name="EMBO J.">
        <title>hRRN3 is essential in the SL1-mediated recruitment of RNA polymerase I to rRNA gene promoters.</title>
        <authorList>
            <person name="Miller G."/>
            <person name="Panov K.I."/>
            <person name="Friedrich J.K."/>
            <person name="Trinkle-Mulcahy L."/>
            <person name="Lamond A.I."/>
            <person name="Zomerdijk J.C.B.M."/>
        </authorList>
    </citation>
    <scope>FUNCTION OF POL I PIC</scope>
    <scope>SUBUNIT</scope>
</reference>
<reference key="7">
    <citation type="journal article" date="2001" name="Mol. Cell. Biol.">
        <title>A step subsequent to preinitiation complex assembly at the ribosomal RNA gene promoter is rate limiting for human RNA polymerase I-dependent transcription.</title>
        <authorList>
            <person name="Panov K.I."/>
            <person name="Friedrich J.K."/>
            <person name="Zomerdijk J.C."/>
        </authorList>
    </citation>
    <scope>FUNCTION OF POL I PIC</scope>
    <scope>SUBUNIT</scope>
</reference>
<reference key="8">
    <citation type="journal article" date="2006" name="EMBO J.">
        <title>UBF activates RNA polymerase I transcription by stimulating promoter escape.</title>
        <authorList>
            <person name="Panov K.I."/>
            <person name="Friedrich J.K."/>
            <person name="Russell J."/>
            <person name="Zomerdijk J.C."/>
        </authorList>
    </citation>
    <scope>FUNCTION OF POL I PIC</scope>
    <scope>SUBUNIT</scope>
</reference>
<reference key="9">
    <citation type="journal article" date="2006" name="Mol. Cell. Biol.">
        <title>RNA polymerase I-specific subunit CAST/hPAF49 has a role in the activation of transcription by upstream binding factor.</title>
        <authorList>
            <person name="Panov K.I."/>
            <person name="Panova T.B."/>
            <person name="Gadal O."/>
            <person name="Nishiyama K."/>
            <person name="Saito T."/>
            <person name="Russell J."/>
            <person name="Zomerdijk J.C.B.M."/>
        </authorList>
    </citation>
    <scope>IDENTIFICATION IN THE RNA POL I COMPLEX</scope>
</reference>
<reference key="10">
    <citation type="journal article" date="2008" name="Proc. Natl. Acad. Sci. U.S.A.">
        <title>A quantitative atlas of mitotic phosphorylation.</title>
        <authorList>
            <person name="Dephoure N."/>
            <person name="Zhou C."/>
            <person name="Villen J."/>
            <person name="Beausoleil S.A."/>
            <person name="Bakalarski C.E."/>
            <person name="Elledge S.J."/>
            <person name="Gygi S.P."/>
        </authorList>
    </citation>
    <scope>PHOSPHORYLATION [LARGE SCALE ANALYSIS] AT SER-1386</scope>
    <scope>IDENTIFICATION BY MASS SPECTROMETRY [LARGE SCALE ANALYSIS]</scope>
    <source>
        <tissue>Cervix carcinoma</tissue>
    </source>
</reference>
<reference key="11">
    <citation type="journal article" date="2009" name="Sci. Signal.">
        <title>Quantitative phosphoproteomic analysis of T cell receptor signaling reveals system-wide modulation of protein-protein interactions.</title>
        <authorList>
            <person name="Mayya V."/>
            <person name="Lundgren D.H."/>
            <person name="Hwang S.-I."/>
            <person name="Rezaul K."/>
            <person name="Wu L."/>
            <person name="Eng J.K."/>
            <person name="Rodionov V."/>
            <person name="Han D.K."/>
        </authorList>
    </citation>
    <scope>IDENTIFICATION BY MASS SPECTROMETRY [LARGE SCALE ANALYSIS]</scope>
    <source>
        <tissue>Leukemic T-cell</tissue>
    </source>
</reference>
<reference key="12">
    <citation type="journal article" date="2010" name="Sci. Signal.">
        <title>Quantitative phosphoproteomics reveals widespread full phosphorylation site occupancy during mitosis.</title>
        <authorList>
            <person name="Olsen J.V."/>
            <person name="Vermeulen M."/>
            <person name="Santamaria A."/>
            <person name="Kumar C."/>
            <person name="Miller M.L."/>
            <person name="Jensen L.J."/>
            <person name="Gnad F."/>
            <person name="Cox J."/>
            <person name="Jensen T.S."/>
            <person name="Nigg E.A."/>
            <person name="Brunak S."/>
            <person name="Mann M."/>
        </authorList>
    </citation>
    <scope>IDENTIFICATION BY MASS SPECTROMETRY [LARGE SCALE ANALYSIS]</scope>
    <source>
        <tissue>Cervix carcinoma</tissue>
    </source>
</reference>
<reference key="13">
    <citation type="journal article" date="2011" name="BMC Syst. Biol.">
        <title>Initial characterization of the human central proteome.</title>
        <authorList>
            <person name="Burkard T.R."/>
            <person name="Planyavsky M."/>
            <person name="Kaupe I."/>
            <person name="Breitwieser F.P."/>
            <person name="Buerckstuemmer T."/>
            <person name="Bennett K.L."/>
            <person name="Superti-Furga G."/>
            <person name="Colinge J."/>
        </authorList>
    </citation>
    <scope>IDENTIFICATION BY MASS SPECTROMETRY [LARGE SCALE ANALYSIS]</scope>
</reference>
<reference key="14">
    <citation type="journal article" date="2011" name="Cancer Res.">
        <title>Nuclear ErbB2 enhances translation and cell growth by activating transcription of ribosomal RNA genes.</title>
        <authorList>
            <person name="Li L.Y."/>
            <person name="Chen H."/>
            <person name="Hsieh Y.H."/>
            <person name="Wang Y.N."/>
            <person name="Chu H.J."/>
            <person name="Chen Y.H."/>
            <person name="Chen H.Y."/>
            <person name="Chien P.J."/>
            <person name="Ma H.T."/>
            <person name="Tsai H.C."/>
            <person name="Lai C.C."/>
            <person name="Sher Y.P."/>
            <person name="Lien H.C."/>
            <person name="Tsai C.H."/>
            <person name="Hung M.C."/>
        </authorList>
    </citation>
    <scope>INTERACTION WITH ERBB2</scope>
</reference>
<reference key="15">
    <citation type="journal article" date="2013" name="J. Proteome Res.">
        <title>Toward a comprehensive characterization of a human cancer cell phosphoproteome.</title>
        <authorList>
            <person name="Zhou H."/>
            <person name="Di Palma S."/>
            <person name="Preisinger C."/>
            <person name="Peng M."/>
            <person name="Polat A.N."/>
            <person name="Heck A.J."/>
            <person name="Mohammed S."/>
        </authorList>
    </citation>
    <scope>PHOSPHORYLATION [LARGE SCALE ANALYSIS] AT SER-240</scope>
    <scope>IDENTIFICATION BY MASS SPECTROMETRY [LARGE SCALE ANALYSIS]</scope>
    <source>
        <tissue>Erythroleukemia</tissue>
    </source>
</reference>
<reference key="16">
    <citation type="journal article" date="2015" name="Hum. Mol. Genet.">
        <title>The Warsaw breakage syndrome-related protein DDX11 is required for ribosomal RNA synthesis and embryonic development.</title>
        <authorList>
            <person name="Sun X."/>
            <person name="Chen H."/>
            <person name="Deng Z."/>
            <person name="Hu B."/>
            <person name="Luo H."/>
            <person name="Zeng X."/>
            <person name="Han L."/>
            <person name="Cai G."/>
            <person name="Ma L."/>
        </authorList>
    </citation>
    <scope>INTERACTION WITH DDX11</scope>
</reference>
<reference key="17">
    <citation type="journal article" date="2016" name="J. Cell Biol.">
        <title>RECQ5 helicase promotes resolution of conflicts between replication and transcription in human cells.</title>
        <authorList>
            <person name="Urban V."/>
            <person name="Dobrovolna J."/>
            <person name="Huehn D."/>
            <person name="Fryzelkova J."/>
            <person name="Bartek J."/>
            <person name="Janscak P."/>
        </authorList>
    </citation>
    <scope>INTERACTION WITH RECQL5</scope>
</reference>
<reference key="18">
    <citation type="journal article" date="2021" name="Cell Discov.">
        <title>Structure of the human RNA polymerase I elongation complex.</title>
        <authorList>
            <person name="Zhao D."/>
            <person name="Liu W."/>
            <person name="Chen K."/>
            <person name="Wu Z."/>
            <person name="Yang H."/>
            <person name="Xu Y."/>
        </authorList>
    </citation>
    <scope>STRUCTURE BY ELECTRON MICROSCOPY (2.81 ANGSTROMS) OF 1-1719 IN COMPLEX WITH DNA-RNA HYBRID AND ZN(2+)</scope>
    <scope>FUNCTION</scope>
    <scope>CATALYTIC ACTIVITY</scope>
    <scope>SUBUNIT</scope>
    <scope>DOMAIN</scope>
    <scope>SITE</scope>
</reference>
<reference key="19">
    <citation type="journal article" date="2021" name="Nat. Struct. Mol. Biol.">
        <title>Cryo-EM structures of human RNA polymerase I.</title>
        <authorList>
            <person name="Misiaszek A.D."/>
            <person name="Girbig M."/>
            <person name="Grotsch H."/>
            <person name="Baudin F."/>
            <person name="Murciano B."/>
            <person name="Lafita A."/>
            <person name="Muller C.W."/>
        </authorList>
    </citation>
    <scope>STRUCTURE BY ELECTRON MICROSCOPY (2.70 ANGSTROMS) IN COMPLEX WITH ZN(2+) AND MG(2+)</scope>
    <scope>FUNCTION</scope>
    <scope>CATALYTIC ACTIVITY</scope>
    <scope>COFACTOR</scope>
    <scope>SUBUNIT</scope>
    <scope>DOMAIN</scope>
    <scope>SUBCELLULAR LOCATION</scope>
</reference>
<reference key="20">
    <citation type="journal article" date="2022" name="Life. Sci Alliance">
        <title>The human RNA polymerase I structure reveals an HMG-like docking domain specific to metazoans.</title>
        <authorList>
            <person name="Daiss J.L."/>
            <person name="Pilsl M."/>
            <person name="Straub K."/>
            <person name="Bleckmann A."/>
            <person name="Hocherl M."/>
            <person name="Heiss F.B."/>
            <person name="Abascal-Palacios G."/>
            <person name="Ramsay E.P."/>
            <person name="Tluckova K."/>
            <person name="Mars J.C."/>
            <person name="Furtges T."/>
            <person name="Bruckmann A."/>
            <person name="Rudack T."/>
            <person name="Bernecky C."/>
            <person name="Lamour V."/>
            <person name="Panov K."/>
            <person name="Vannini A."/>
            <person name="Moss T."/>
            <person name="Engel C."/>
        </authorList>
    </citation>
    <scope>STRUCTURE BY ELECTRON MICROSCOPY (4.09 ANGSTROMS)</scope>
    <scope>FUNCTION</scope>
    <scope>CATALYTIC ACTIVITY</scope>
    <scope>SUBUNIT</scope>
    <scope>INTERACTION WITH TOP2A</scope>
    <scope>SUBCELLULAR LOCATION</scope>
    <scope>DOMAIN</scope>
</reference>
<reference key="21">
    <citation type="journal article" date="2015" name="Am. J. Hum. Genet.">
        <title>Acrofacial dysostosis, Cincinnati type, a mandibulofacial dysostosis syndrome with limb anomalies, is caused by POLR1A dysfunction.</title>
        <authorList>
            <person name="Weaver K.N."/>
            <person name="Watt K.E."/>
            <person name="Hufnagel R.B."/>
            <person name="Navajas Acedo J."/>
            <person name="Linscott L.L."/>
            <person name="Sund K.L."/>
            <person name="Bender P.L."/>
            <person name="Koenig R."/>
            <person name="Lourenco C.M."/>
            <person name="Hehr U."/>
            <person name="Hopkin R.J."/>
            <person name="Lohmann D.R."/>
            <person name="Trainor P.A."/>
            <person name="Wieczorek D."/>
            <person name="Saal H.M."/>
        </authorList>
    </citation>
    <scope>VARIANTS AFDCIN GLN-593 AND PHE-1299</scope>
    <scope>INVOLVEMENT IN AFDCIN</scope>
</reference>
<reference key="22">
    <citation type="journal article" date="2017" name="Eur. J. Hum. Genet.">
        <title>Severe neurodegenerative disease in brothers with homozygous mutation in POLR1A.</title>
        <authorList>
            <person name="Kara B."/>
            <person name="Koeroglu C."/>
            <person name="Peltonen K."/>
            <person name="Steinberg R.C."/>
            <person name="Maras Genc H."/>
            <person name="Hoelttae-Vuori M."/>
            <person name="Gueven A."/>
            <person name="Kanerva K."/>
            <person name="Kotil T."/>
            <person name="Solakoglu S."/>
            <person name="Zhou Y."/>
            <person name="Olkkonen V.M."/>
            <person name="Ikonen E."/>
            <person name="Laiho M."/>
            <person name="Tolun A."/>
        </authorList>
    </citation>
    <scope>VARIANT HLD27 LEU-934</scope>
    <scope>CHARACTERIZATION OF VARIANT HLD27 LEU-934</scope>
    <scope>INVOLVEMENT IN HLD27</scope>
</reference>
<reference key="23">
    <citation type="journal article" date="2023" name="Am. J. Hum. Genet.">
        <title>POLR1A variants underlie phenotypic heterogeneity in craniofacial, neural, and cardiac anomalies.</title>
        <authorList>
            <person name="Smallwood K."/>
            <person name="Watt K.E.N."/>
            <person name="Ide S."/>
            <person name="Baltrunaite K."/>
            <person name="Brunswick C."/>
            <person name="Inskeep K."/>
            <person name="Capannari C."/>
            <person name="Adam M.P."/>
            <person name="Begtrup A."/>
            <person name="Bertola D.R."/>
            <person name="Demmer L."/>
            <person name="Demo E."/>
            <person name="Devinsky O."/>
            <person name="Gallagher E.R."/>
            <person name="Guillen Sacoto M.J."/>
            <person name="Jech R."/>
            <person name="Keren B."/>
            <person name="Kussmann J."/>
            <person name="Ladda R."/>
            <person name="Lansdon L.A."/>
            <person name="Lunke S."/>
            <person name="Mardy A."/>
            <person name="McWalters K."/>
            <person name="Person R."/>
            <person name="Raiti L."/>
            <person name="Saitoh N."/>
            <person name="Saunders C.J."/>
            <person name="Schnur R."/>
            <person name="Skorvanek M."/>
            <person name="Sell S.L."/>
            <person name="Slavotinek A."/>
            <person name="Sullivan B.R."/>
            <person name="Stark Z."/>
            <person name="Symonds J.D."/>
            <person name="Wenger T."/>
            <person name="Weber S."/>
            <person name="Whalen S."/>
            <person name="White S.M."/>
            <person name="Winkelmann J."/>
            <person name="Zech M."/>
            <person name="Zeidler S."/>
            <person name="Maeshima K."/>
            <person name="Stottmann R.W."/>
            <person name="Trainor P.A."/>
            <person name="Weaver K.N."/>
        </authorList>
    </citation>
    <scope>VARIANTS AFDCIN VAL-59; HIS-393; LYS-481; ILE-496; ILE-1241; 1284-GLN--ARG-1720 DEL; GLU-1330 DEL; PHE-1562; MET-1631 AND LEU-1638</scope>
    <scope>INVOLVEMENT IN AFDCIN</scope>
    <scope>CHARACTERIZATION OF VARIANTS AFDCIN VAL-59; HIS-393; GLN-593; GLU-1330 DEL AND PHE-1562</scope>
</reference>
<reference key="24">
    <citation type="journal article" date="2023" name="Brain">
        <title>A homozygous POLR1A variant causes leukodystrophy and affects protein homeostasis.</title>
        <authorList>
            <person name="Misceo D."/>
            <person name="Lirussi L."/>
            <person name="Stroemme P."/>
            <person name="Sumathipala D."/>
            <person name="Guerin A."/>
            <person name="Wolf N.I."/>
            <person name="Server A."/>
            <person name="Stensland M."/>
            <person name="Dalhus B."/>
            <person name="Tolun A."/>
            <person name="Kroes H.Y."/>
            <person name="Nyman T.A."/>
            <person name="Nilsen H.L."/>
            <person name="Frengen E."/>
        </authorList>
    </citation>
    <scope>VARIANT HLD27 ASN-642</scope>
    <scope>CHARACTERIZATION OF VARIANT HLD27 ASN-642</scope>
    <scope>INVOLVEMENT IN HLD27</scope>
    <scope>SUBCELLULAR LOCATION</scope>
</reference>
<name>RPA1_HUMAN</name>
<organism>
    <name type="scientific">Homo sapiens</name>
    <name type="common">Human</name>
    <dbReference type="NCBI Taxonomy" id="9606"/>
    <lineage>
        <taxon>Eukaryota</taxon>
        <taxon>Metazoa</taxon>
        <taxon>Chordata</taxon>
        <taxon>Craniata</taxon>
        <taxon>Vertebrata</taxon>
        <taxon>Euteleostomi</taxon>
        <taxon>Mammalia</taxon>
        <taxon>Eutheria</taxon>
        <taxon>Euarchontoglires</taxon>
        <taxon>Primates</taxon>
        <taxon>Haplorrhini</taxon>
        <taxon>Catarrhini</taxon>
        <taxon>Hominidae</taxon>
        <taxon>Homo</taxon>
    </lineage>
</organism>
<sequence>MLISKNMPWRRLQGISFGMYSAEELKKLSVKSITNPRYLDSLGNPSANGLYDLALGPADSKEVCSTCVQDFSNCSGHLGHIELPLTVYNPLLFDKLYLLLRGSCLNCHMLTCPRAVIHLLLCQLRVLEVGALQAVYELERILNRFLEENPDPSASEIREELEQYTTEIVQNNLLGSQGAHVKNVCESKSKLIALFWKAHMNAKRCPHCKTGRSVVRKEHNSKLTITFPAMVHRTAGQKDSEPLGIEEAQIGKRGYLTPTSAREHLSALWKNEGFFLNYLFSGMDDDGMESRFNPSVFFLDFLVVPPSRYRPVSRLGDQMFTNGQTVNLQAVMKDVVLIRKLLALMAQEQKLPEEVATPTTDEEKDSLIAIDRSFLSTLPGQSLIDKLYNIWIRLQSHVNIVFDSEMDKLMMDKYPGIRQILEKKEGLFRKHMMGKRVDYAARSVICPDMYINTNEIGIPMVFATKLTYPQPVTPWNVQELRQAVINGPNVHPGASMVINEDGSRTALSAVDMTQREAVAKQLLTPATGAPKPQGTKIVCRHVKNGDILLLNRQPTLHRPSIQAHRARILPEEKVLRLHYANCKAYNADFDGDEMNAHFPQSELGRAEAYVLACTDQQYLVPKDGQPLAGLIQDHMVSGASMTTRGCFFTREHYMELVYRGLTDKVGRVKLLSPSILKPFPLWTGKQVVSTLLINIIPEDHIPLNLSGKAKITGKAWVKETPRSVPGFNPDSMCESQVIIREGELLCGVLDKAHYGSSAYGLVHCCYEIYGGETSGKVLTCLARLFTAYLQLYRGFTLGVEDILVKPKADVKRQRIIEESTHCGPQAVRAALNLPEAASYDEVRGKWQDAHLGKDQRDFNMIDLKFKEEVNHYSNEINKACMPFGLHRQFPENSLQMMVQSGAKGSTVNTMQISCLLGQIELEGRRPPLMASGKSLPCFEPYEFTPRAGGFVTGRFLTGIKPPEFFFHCMAGREGLVDTAVKTSRSGYLQRCIIKHLEGLVVQYDLTVRDSDGSVVQFLYGEDGLDIPKTQFLQPKQFPFLASNYEVIMKSQHLHEVLSRADPKKALHHFRAIKKWQSKHPNTLLRRGAFLSYSQKIQEAVKALKLESENRNGRSPGTQEMLRMWYELDEESRRKYQKKAAACPDPSLSVWRPDIYFASVSETFETKVDDYSQEWAAQTEKSYEKSELSLDRLRTLLQLKWQRSLCEPGEAVGLLAAQSIGEPSTQMTLNTFHFAGRGEMNVTLGIPRLREILMVASANIKTPMMSVPVLNTKKALKRVKSLKKQLTRVCLGEVLQKIDVQESFCMEEKQNKFQVYQLRFQFLPHAYYQQEKCLRPEDILRFMETRFFKLLMESIKKKNNKASAFRNVNTRRATQRDLDNAGELGRSRGEQEGDEEEEGHIVDAEAEEGDADASDAKRKEKQEEEVDYESEEEEEREGEENDDEDMQEERNPHREGARKTQEQDEEVGLGTEEDPSLPALLTQPRKPTHSQEPQGPEAMERRVQAVREIHPFIDDYQYDTEESLWCQVTVKLPLMKINFDMSSLVVSLAHGAVIYATKGITRCLLNETTNNKNEKELVLNTEGINLPELFKYAEVLDLRRLYSNDIHAIANTYGIEAALRVIEKEIKDVFAVYGIAVDPRHLSLVADYMCFEGVYKPLNRFGIRSNSSPLQQMTFETSFQFLKQATMLGSHDELRSPSACLVVGKVVRGGTGLFELKQPLR</sequence>
<keyword id="KW-0002">3D-structure</keyword>
<keyword id="KW-0158">Chromosome</keyword>
<keyword id="KW-0225">Disease variant</keyword>
<keyword id="KW-0240">DNA-directed RNA polymerase</keyword>
<keyword id="KW-1026">Leukodystrophy</keyword>
<keyword id="KW-0460">Magnesium</keyword>
<keyword id="KW-0479">Metal-binding</keyword>
<keyword id="KW-0548">Nucleotidyltransferase</keyword>
<keyword id="KW-0539">Nucleus</keyword>
<keyword id="KW-0597">Phosphoprotein</keyword>
<keyword id="KW-1267">Proteomics identification</keyword>
<keyword id="KW-1185">Reference proteome</keyword>
<keyword id="KW-0804">Transcription</keyword>
<keyword id="KW-0808">Transferase</keyword>
<keyword id="KW-0862">Zinc</keyword>
<gene>
    <name evidence="24 27" type="primary">POLR1A</name>
</gene>
<protein>
    <recommendedName>
        <fullName>DNA-directed RNA polymerase I subunit RPA1</fullName>
        <shortName>RNA polymerase I subunit A1</shortName>
        <ecNumber evidence="16 17 18">2.7.7.6</ecNumber>
    </recommendedName>
    <alternativeName>
        <fullName evidence="23">A190</fullName>
    </alternativeName>
    <alternativeName>
        <fullName>DNA-directed RNA polymerase I largest subunit</fullName>
    </alternativeName>
    <alternativeName>
        <fullName>DNA-directed RNA polymerase I subunit A</fullName>
    </alternativeName>
    <alternativeName>
        <fullName>RNA polymerase I 194 kDa subunit</fullName>
        <shortName>RPA194</shortName>
    </alternativeName>
</protein>
<evidence type="ECO:0000250" key="1">
    <source>
        <dbReference type="UniProtKB" id="G3MZY8"/>
    </source>
</evidence>
<evidence type="ECO:0000250" key="2">
    <source>
        <dbReference type="UniProtKB" id="O35134"/>
    </source>
</evidence>
<evidence type="ECO:0000250" key="3">
    <source>
        <dbReference type="UniProtKB" id="P04050"/>
    </source>
</evidence>
<evidence type="ECO:0000250" key="4">
    <source>
        <dbReference type="UniProtKB" id="P10964"/>
    </source>
</evidence>
<evidence type="ECO:0000250" key="5">
    <source>
        <dbReference type="UniProtKB" id="P24928"/>
    </source>
</evidence>
<evidence type="ECO:0000256" key="6">
    <source>
        <dbReference type="SAM" id="MobiDB-lite"/>
    </source>
</evidence>
<evidence type="ECO:0000269" key="7">
    <source>
    </source>
</evidence>
<evidence type="ECO:0000269" key="8">
    <source>
    </source>
</evidence>
<evidence type="ECO:0000269" key="9">
    <source>
    </source>
</evidence>
<evidence type="ECO:0000269" key="10">
    <source>
    </source>
</evidence>
<evidence type="ECO:0000269" key="11">
    <source>
    </source>
</evidence>
<evidence type="ECO:0000269" key="12">
    <source>
    </source>
</evidence>
<evidence type="ECO:0000269" key="13">
    <source>
    </source>
</evidence>
<evidence type="ECO:0000269" key="14">
    <source>
    </source>
</evidence>
<evidence type="ECO:0000269" key="15">
    <source>
    </source>
</evidence>
<evidence type="ECO:0000269" key="16">
    <source>
    </source>
</evidence>
<evidence type="ECO:0000269" key="17">
    <source>
    </source>
</evidence>
<evidence type="ECO:0000269" key="18">
    <source>
    </source>
</evidence>
<evidence type="ECO:0000269" key="19">
    <source>
    </source>
</evidence>
<evidence type="ECO:0000269" key="20">
    <source>
    </source>
</evidence>
<evidence type="ECO:0000269" key="21">
    <source ref="1"/>
</evidence>
<evidence type="ECO:0000269" key="22">
    <source ref="3"/>
</evidence>
<evidence type="ECO:0000303" key="23">
    <source>
    </source>
</evidence>
<evidence type="ECO:0000303" key="24">
    <source>
    </source>
</evidence>
<evidence type="ECO:0000305" key="25"/>
<evidence type="ECO:0000305" key="26">
    <source>
    </source>
</evidence>
<evidence type="ECO:0000312" key="27">
    <source>
        <dbReference type="HGNC" id="HGNC:17264"/>
    </source>
</evidence>
<evidence type="ECO:0007744" key="28">
    <source>
        <dbReference type="PDB" id="7OB9"/>
    </source>
</evidence>
<evidence type="ECO:0007744" key="29">
    <source>
        <dbReference type="PDB" id="7VBA"/>
    </source>
</evidence>
<evidence type="ECO:0007744" key="30">
    <source>
    </source>
</evidence>
<evidence type="ECO:0007744" key="31">
    <source>
    </source>
</evidence>
<evidence type="ECO:0007829" key="32">
    <source>
        <dbReference type="PDB" id="7OB9"/>
    </source>
</evidence>
<evidence type="ECO:0007829" key="33">
    <source>
        <dbReference type="PDB" id="7OBA"/>
    </source>
</evidence>
<evidence type="ECO:0007829" key="34">
    <source>
        <dbReference type="PDB" id="7OBB"/>
    </source>
</evidence>
<comment type="function">
    <text evidence="4 7 8 10 16 17 18">Catalytic core component of RNA polymerase I (Pol I), a DNA-dependent RNA polymerase which synthesizes ribosomal RNA precursors using the four ribonucleoside triphosphates as substrates. Transcribes 47S pre-rRNAs from multicopy rRNA gene clusters, giving rise to 5.8S, 18S and 28S ribosomal RNAs (PubMed:11250903, PubMed:11283244, PubMed:16858408, PubMed:34671025, PubMed:34887565, PubMed:36271492). Pol I-mediated transcription cycle proceeds through transcription initiation, transcription elongation and transcription termination stages. During transcription initiation, Pol I pre-initiation complex (PIC) is recruited by the selectivity factor 1 (SL1/TIF-IB) complex bound to the core promoter that precedes an rDNA repeat unit. The PIC assembly bends the promoter favoring the formation of the transcription bubble and promoter escape. Once the polymerase has escaped from the promoter it enters the elongation phase during which RNA is actively polymerized, based on complementarity with the template DNA strand. Highly processive, assembles in structures referred to as 'Miller trees' where many elongating Pol I complexes queue and transcribe the same rDNA coding regions. At terminator sequences downstream of the rDNA gene, PTRF interacts with Pol I and halts Pol I transcription leading to the release of the RNA transcript and polymerase from the DNA (PubMed:11250903, PubMed:11283244, PubMed:16858408, PubMed:34671025, PubMed:34887565, PubMed:36271492). Forms Pol I active center together with the second largest subunit POLR1B/RPA2. Appends one nucleotide at a time to the 3' end of the nascent RNA, with POLR1A/RPA1 contributing a Mg(2+)-coordinating DxDGD motif, and POLR1B/RPA2 participating in the coordination of a second Mg(2+) ion and providing lysine residues believed to facilitate Watson-Crick base pairing between the incoming nucleotide and the template base. Typically, Mg(2+) ions direct a 5' nucleoside triphosphate to form a phosphodiester bond with the 3' hydroxyl of the preceding nucleotide of the nascent RNA, with the elimination of pyrophosphate. Has proofreading activity: Pauses and backtracks to allow the cleavage of a missincorporated nucleotide via POLR1H/RPA12. High Pol I processivity is associated with decreased transcription fidelity (By similarity) (PubMed:11250903, PubMed:11283244, PubMed:16858408, PubMed:34671025, PubMed:34887565, PubMed:36271492).</text>
</comment>
<comment type="catalytic activity">
    <reaction evidence="16 17 18">
        <text>RNA(n) + a ribonucleoside 5'-triphosphate = RNA(n+1) + diphosphate</text>
        <dbReference type="Rhea" id="RHEA:21248"/>
        <dbReference type="Rhea" id="RHEA-COMP:14527"/>
        <dbReference type="Rhea" id="RHEA-COMP:17342"/>
        <dbReference type="ChEBI" id="CHEBI:33019"/>
        <dbReference type="ChEBI" id="CHEBI:61557"/>
        <dbReference type="ChEBI" id="CHEBI:140395"/>
        <dbReference type="EC" id="2.7.7.6"/>
    </reaction>
    <physiologicalReaction direction="left-to-right" evidence="16 17 18">
        <dbReference type="Rhea" id="RHEA:21249"/>
    </physiologicalReaction>
</comment>
<comment type="cofactor">
    <cofactor evidence="17">
        <name>Mg(2+)</name>
        <dbReference type="ChEBI" id="CHEBI:18420"/>
    </cofactor>
    <text evidence="5 17">Two Mg(2+) ions are coordinated by both the catalytic residues and the nucleic acid substrate to enhance substrate recognition and catalytic efficiency.</text>
</comment>
<comment type="subunit">
    <text evidence="2 7 8 9 10 11 13 14 16 17 18">Component of the RNA polymerase I (Pol I) complex consisting of 13 subunits: a ten-subunit catalytic core composed of POLR1A/RPA1, POLR1B/RPA2, POLR1C/RPAC1, POLR1D/RPAC2, POLR1H/RPA12, POLR2E/RPABC1, POLR2F/RPABC2, POLR2H/RPABC3, POLR2K/RPABC4 and POLR2L/RPABC5; a mobile stalk subunit POLR1F/RPA43 protruding from the core and additional subunits homologous to general transcription factors POLR1E/RPA49 and POLR1G/RPA34 (PubMed:16809778, PubMed:34671025, PubMed:34887565, PubMed:36271492). Part of Pol I pre-initiation complex (PIC), in which Pol I core assembles with RRN3 and promoter-bound UTBF and SL1/TIF-IB complex. Interacts (via dock II domain) with TOP2A; this interaction may assist Pol I transcription initiation by releasing supercoils occurring during DNA unwinding (PubMed:11250903, PubMed:11283244, PubMed:16809778, PubMed:16858408, PubMed:36271492). Interacts with CAVIN1; this interaction induces the dissociation of Pol I complex paused at rDNA terminator sequences (By similarity). Interacts with MYO1C (By similarity). Interacts with ERBB2 (PubMed:21555369). Interacts with DDX11 (PubMed:26089203). Interacts with RECQL5 (PubMed:27502483).</text>
</comment>
<comment type="interaction">
    <interactant intactId="EBI-359472">
        <id>O95602</id>
    </interactant>
    <interactant intactId="EBI-749277">
        <id>Q96IM9</id>
        <label>DYDC2</label>
    </interactant>
    <organismsDiffer>false</organismsDiffer>
    <experiments>3</experiments>
</comment>
<comment type="interaction">
    <interactant intactId="EBI-359472">
        <id>O95602</id>
    </interactant>
    <interactant intactId="EBI-641062">
        <id>P04626</id>
        <label>ERBB2</label>
    </interactant>
    <organismsDiffer>false</organismsDiffer>
    <experiments>16</experiments>
</comment>
<comment type="interaction">
    <interactant intactId="EBI-359472">
        <id>O95602</id>
    </interactant>
    <interactant intactId="EBI-16439278">
        <id>Q6FHY5</id>
        <label>MEOX2</label>
    </interactant>
    <organismsDiffer>false</organismsDiffer>
    <experiments>3</experiments>
</comment>
<comment type="interaction">
    <interactant intactId="EBI-359472">
        <id>O95602</id>
    </interactant>
    <interactant intactId="EBI-355441">
        <id>Q9H9Y6</id>
        <label>POLR1B</label>
    </interactant>
    <organismsDiffer>false</organismsDiffer>
    <experiments>4</experiments>
</comment>
<comment type="interaction">
    <interactant intactId="EBI-359472">
        <id>O95602</id>
    </interactant>
    <interactant intactId="EBI-307352">
        <id>Q04864</id>
        <label>REL</label>
    </interactant>
    <organismsDiffer>false</organismsDiffer>
    <experiments>3</experiments>
</comment>
<comment type="interaction">
    <interactant intactId="EBI-359472">
        <id>O95602</id>
    </interactant>
    <interactant intactId="EBI-533224">
        <id>P15884</id>
        <label>TCF4</label>
    </interactant>
    <organismsDiffer>false</organismsDiffer>
    <experiments>3</experiments>
</comment>
<comment type="subcellular location">
    <subcellularLocation>
        <location evidence="18 19 26">Nucleus</location>
        <location evidence="18 19 26">Nucleolus</location>
    </subcellularLocation>
    <subcellularLocation>
        <location evidence="2">Chromosome</location>
    </subcellularLocation>
</comment>
<comment type="domain">
    <text evidence="16">The clamps form the DNA-binding cleft.</text>
</comment>
<comment type="domain">
    <text evidence="1 16">The bridging helix crosses the cleft near the catalytic site and is thought to promote polymerase translocation by acting as a ratchet that moves the DNA-RNA hybrid through the active site.</text>
</comment>
<comment type="domain">
    <text evidence="1">The trigger loop allows entry of NTPs into the active site, switching between an open and closed state with each NTP addition cycle.</text>
</comment>
<comment type="domain">
    <text evidence="16">The funnel accommodates POLR1H/RPA12 favoring mismatched RNA cleavage upon backtracking.</text>
</comment>
<comment type="domain">
    <text evidence="18">The high mobility group-like domain (dock II; residues 1060-1155) binds TOP2A, but cannot bind DNA; may assist Pol I initiation by releasing supercoils occurring during DNA unwinding.</text>
</comment>
<comment type="disease" evidence="12 20">
    <disease id="DI-04483">
        <name>Acrofacial dysostosis, Cincinnati type</name>
        <acronym>AFDCIN</acronym>
        <description>A form of acrofacial dysostosis, a group of disorders characterized by malformations of the craniofacial skeleton and, in some patients, the limbs. AFDCIN patients may also have structural cardiac defects and neurologic abnormalities including developmental delay, hypotonia, motor delay and seizures. AFDCIN inheritance is autosomal dominant.</description>
        <dbReference type="MIM" id="616462"/>
    </disease>
    <text>The disease is caused by variants affecting the gene represented in this entry.</text>
</comment>
<comment type="disease" evidence="15 19">
    <disease id="DI-06824">
        <name>Leukodystrophy, hypomyelinating, 27</name>
        <acronym>HLD27</acronym>
        <description>A form of hypomyelinating leukodystrophy, a group of heterogeneous disorders characterized by persistent deficit of myelin observed on brain imaging. HLD27 is an autosomal recessive form characterized by global developmental delay apparent from infancy, poor or absent speech, ataxic gait or inability to sit or walk, spasticity, and abnormal eye movements. Some patients have seizures. Brain imaging shows hypomyelinating leukodystrophy, cerebellar atrophy, and thin corpus callosum.</description>
        <dbReference type="MIM" id="620675"/>
    </disease>
    <text>The disease may be caused by variants affecting the gene represented in this entry.</text>
</comment>
<comment type="similarity">
    <text evidence="25">Belongs to the RNA polymerase beta' chain family.</text>
</comment>
<comment type="sequence caution" evidence="25">
    <conflict type="frameshift">
        <sequence resource="EMBL-CDS" id="AAC99959"/>
    </conflict>
</comment>
<comment type="sequence caution" evidence="25">
    <conflict type="frameshift">
        <sequence resource="EMBL-CDS" id="AAD09356"/>
    </conflict>
</comment>